<protein>
    <recommendedName>
        <fullName evidence="1">ATP synthase subunit H, mitochondrial</fullName>
    </recommendedName>
</protein>
<proteinExistence type="evidence at protein level"/>
<organism evidence="6">
    <name type="scientific">Pichia angusta</name>
    <name type="common">Yeast</name>
    <name type="synonym">Hansenula polymorpha</name>
    <dbReference type="NCBI Taxonomy" id="870730"/>
    <lineage>
        <taxon>Eukaryota</taxon>
        <taxon>Fungi</taxon>
        <taxon>Dikarya</taxon>
        <taxon>Ascomycota</taxon>
        <taxon>Saccharomycotina</taxon>
        <taxon>Pichiomycetes</taxon>
        <taxon>Pichiales</taxon>
        <taxon>Pichiaceae</taxon>
        <taxon>Ogataea</taxon>
    </lineage>
</organism>
<keyword id="KW-0066">ATP synthesis</keyword>
<keyword id="KW-0138">CF(0)</keyword>
<keyword id="KW-0903">Direct protein sequencing</keyword>
<keyword id="KW-0375">Hydrogen ion transport</keyword>
<keyword id="KW-0406">Ion transport</keyword>
<keyword id="KW-0472">Membrane</keyword>
<keyword id="KW-0496">Mitochondrion</keyword>
<keyword id="KW-0999">Mitochondrion inner membrane</keyword>
<keyword id="KW-0813">Transport</keyword>
<gene>
    <name evidence="1" type="primary">ATP14</name>
</gene>
<accession>C0HK64</accession>
<evidence type="ECO:0000250" key="1">
    <source>
        <dbReference type="UniProtKB" id="Q12349"/>
    </source>
</evidence>
<evidence type="ECO:0000250" key="2">
    <source>
        <dbReference type="UniProtKB" id="Q6C2V6"/>
    </source>
</evidence>
<evidence type="ECO:0000269" key="3">
    <source>
    </source>
</evidence>
<evidence type="ECO:0000269" key="4">
    <source>
    </source>
</evidence>
<evidence type="ECO:0000269" key="5">
    <source ref="1"/>
</evidence>
<evidence type="ECO:0000303" key="6">
    <source>
    </source>
</evidence>
<evidence type="ECO:0000303" key="7">
    <source ref="1"/>
</evidence>
<evidence type="ECO:0000305" key="8"/>
<evidence type="ECO:0000305" key="9">
    <source>
    </source>
</evidence>
<dbReference type="SMR" id="C0HK64"/>
<dbReference type="GO" id="GO:0005743">
    <property type="term" value="C:mitochondrial inner membrane"/>
    <property type="evidence" value="ECO:0007669"/>
    <property type="project" value="UniProtKB-SubCell"/>
</dbReference>
<dbReference type="GO" id="GO:0045259">
    <property type="term" value="C:proton-transporting ATP synthase complex"/>
    <property type="evidence" value="ECO:0007669"/>
    <property type="project" value="UniProtKB-KW"/>
</dbReference>
<dbReference type="GO" id="GO:0046933">
    <property type="term" value="F:proton-transporting ATP synthase activity, rotational mechanism"/>
    <property type="evidence" value="ECO:0007669"/>
    <property type="project" value="TreeGrafter"/>
</dbReference>
<dbReference type="InterPro" id="IPR019711">
    <property type="entry name" value="ATP_synth_F0_suH"/>
</dbReference>
<dbReference type="PANTHER" id="PTHR28207">
    <property type="entry name" value="ATP SYNTHASE SUBUNIT H, MITOCHONDRIAL"/>
    <property type="match status" value="1"/>
</dbReference>
<dbReference type="PANTHER" id="PTHR28207:SF1">
    <property type="entry name" value="ATP SYNTHASE SUBUNIT H, MITOCHONDRIAL"/>
    <property type="match status" value="1"/>
</dbReference>
<dbReference type="Pfam" id="PF10775">
    <property type="entry name" value="ATP_sub_h"/>
    <property type="match status" value="1"/>
</dbReference>
<feature type="chain" id="PRO_0000445303" description="ATP synthase subunit H, mitochondrial" evidence="5">
    <location>
        <begin position="1"/>
        <end position="89"/>
    </location>
</feature>
<sequence>NLVTDLYVKELKAFKPTPASAADAEAATKPWKLPQAAKVPSLEGEGADALAEYDSAKVEVVEASGETAAEEYNPDDWFVFEEEEEPGHH</sequence>
<name>ATP14_PICAN</name>
<reference evidence="8" key="1">
    <citation type="submission" date="2016-08" db="UniProtKB">
        <authorList>
            <person name="Fearnley I.M."/>
        </authorList>
    </citation>
    <scope>PARTIAL PROTEIN SEQUENCE</scope>
    <source>
        <strain evidence="7">A16 / NCYC 2310</strain>
    </source>
</reference>
<reference evidence="8" key="2">
    <citation type="journal article" date="2015" name="Biochem. J.">
        <title>The purification and characterization of ATP synthase complexes from the mitochondria of four fungal species.</title>
        <authorList>
            <person name="Liu S."/>
            <person name="Charlesworth T.J."/>
            <person name="Bason J.V."/>
            <person name="Montgomery M.G."/>
            <person name="Harbour M.E."/>
            <person name="Fearnley I.M."/>
            <person name="Walker J.E."/>
        </authorList>
    </citation>
    <scope>PROTEIN SEQUENCE OF 1-10</scope>
    <scope>IDENTIFICATION IN ATP SYNTHASE COMPLEX</scope>
    <scope>FUNCTION OF ATPASE COMPLEX</scope>
    <scope>SUBUNIT</scope>
    <scope>SUBCELLULAR LOCATION</scope>
    <scope>MASS SPECTROMETRY</scope>
    <scope>IDENTIFICATION BY MASS SPECTROMETRY</scope>
    <source>
        <strain evidence="6">A16 / NCYC 2310</strain>
    </source>
</reference>
<reference evidence="8" key="3">
    <citation type="journal article" date="2016" name="Proc. Natl. Acad. Sci. U.S.A.">
        <title>Structure of the mitochondrial ATP synthase from Pichia angusta determined by electron cryo-microscopy.</title>
        <authorList>
            <person name="Vinothkumar K.R."/>
            <person name="Montgomery M.G."/>
            <person name="Liu S."/>
            <person name="Walker J.E."/>
        </authorList>
    </citation>
    <scope>STRUCTURE BY ELECTRON MICROSCOPY (7.0 ANGSTROMS) OF MONOMERIC ATP SYNTHASE COMPLEX IN COMPLEX WITH BOVINE ATPIF1</scope>
    <scope>FUNCTION</scope>
    <scope>SUBUNIT</scope>
    <scope>SUBCELLULAR LOCATION</scope>
</reference>
<comment type="function">
    <text evidence="2 3 4">Mitochondrial membrane ATP synthase (F(1)F(0) ATP synthase or Complex V) produces ATP from ADP in the presence of a proton gradient across the membrane which is generated by electron transport complexes of the respiratory chain (PubMed:25759169). F-type ATP synthases consist of two structural domains, F(1) - containing the extramembraneous catalytic core, and F(0) - containing the membrane proton channel, linked together by a central stalk and a peripheral stalk (PubMed:27791192). During catalysis, ATP synthesis in the catalytic domain of F(1) is coupled via a rotary mechanism of the central stalk subunits to proton translocation (By similarity). Part of the peripheral stalk (PubMed:27791192).</text>
</comment>
<comment type="subunit">
    <text evidence="2 3 4">F-type ATP synthases have 2 components, the catalytic core F(1) and the membrane-embedded component F(0), linked together by a central stalk and a peripheral stalk (PubMed:27791192). The central stalk, also called rotor shaft, is often seen as part of F(1) (PubMed:27791192). The peripheral stalk is seen as part of F(0). F(0) contains the membrane channel next to the rotor (PubMed:27791192). F-type ATP synthases form dimers but each monomer functions independently in ATP generation (By similarity). The dimer consists of 18 different polypeptides: ATP1 (subunit alpha, part of F(1), 3 molecules per monomer), ATP2 (subunit beta, part of F(1), 3 molecules per monomer), ATP3 (subunit gamma, part of the central stalk), ATP4 (subunit b, part of the peripheral stalk), ATP5/OSCP (subunit 5/OSCP, part of the peripheral stalk), ATP6 (subunit a, part of the peripheral stalk), ATP7 (subunit d, part of the peripheral stalk), ATP8 (subunit 8, part of the peripheral stalk), OLI1 (subunit c, part of the rotor, 10 molecules per monomer), ATP14 (subunit H, part of the peripheral stalk), ATP15 (subunit epsilon, part of the central stalk), ATP16 (subunit delta, part of the central stalk), ATP17 (subunit f, part of the peripheral stalk), ATP18 (subunit i/j, part of the peripheral stalk) (PubMed:25759169, PubMed:27791192). Dimer-specific subunits are ATP19 (subunit k, at interface between monomers), ATP20 (subunit g, at interface between monomers), TIM11 (subunit e, at interface between monomers) (By similarity). Also contains subunit L (PubMed:25759169).</text>
</comment>
<comment type="subcellular location">
    <subcellularLocation>
        <location evidence="9">Mitochondrion inner membrane</location>
        <topology evidence="9">Peripheral membrane protein</topology>
        <orientation evidence="9">Matrix side</orientation>
    </subcellularLocation>
    <text evidence="9">The F-type ATP synthase complex is anchored in the mitochondrial inner membrane via the F(0) domain with the F(1) domain and the peripheral stalk extending into the mitochondrial matrix.</text>
</comment>
<comment type="mass spectrometry"/>
<comment type="similarity">
    <text evidence="8">Belongs to the ATPase h subunit family.</text>
</comment>